<reference key="1">
    <citation type="journal article" date="2007" name="Genome Res.">
        <title>Genome sequence of a proteolytic (Group I) Clostridium botulinum strain Hall A and comparative analysis of the clostridial genomes.</title>
        <authorList>
            <person name="Sebaihia M."/>
            <person name="Peck M.W."/>
            <person name="Minton N.P."/>
            <person name="Thomson N.R."/>
            <person name="Holden M.T.G."/>
            <person name="Mitchell W.J."/>
            <person name="Carter A.T."/>
            <person name="Bentley S.D."/>
            <person name="Mason D.R."/>
            <person name="Crossman L."/>
            <person name="Paul C.J."/>
            <person name="Ivens A."/>
            <person name="Wells-Bennik M.H.J."/>
            <person name="Davis I.J."/>
            <person name="Cerdeno-Tarraga A.M."/>
            <person name="Churcher C."/>
            <person name="Quail M.A."/>
            <person name="Chillingworth T."/>
            <person name="Feltwell T."/>
            <person name="Fraser A."/>
            <person name="Goodhead I."/>
            <person name="Hance Z."/>
            <person name="Jagels K."/>
            <person name="Larke N."/>
            <person name="Maddison M."/>
            <person name="Moule S."/>
            <person name="Mungall K."/>
            <person name="Norbertczak H."/>
            <person name="Rabbinowitsch E."/>
            <person name="Sanders M."/>
            <person name="Simmonds M."/>
            <person name="White B."/>
            <person name="Whithead S."/>
            <person name="Parkhill J."/>
        </authorList>
    </citation>
    <scope>NUCLEOTIDE SEQUENCE [LARGE SCALE GENOMIC DNA]</scope>
    <source>
        <strain>Hall / ATCC 3502 / NCTC 13319 / Type A</strain>
    </source>
</reference>
<reference key="2">
    <citation type="journal article" date="2007" name="PLoS ONE">
        <title>Analysis of the neurotoxin complex genes in Clostridium botulinum A1-A4 and B1 strains: BoNT/A3, /Ba4 and /B1 clusters are located within plasmids.</title>
        <authorList>
            <person name="Smith T.J."/>
            <person name="Hill K.K."/>
            <person name="Foley B.T."/>
            <person name="Detter J.C."/>
            <person name="Munk A.C."/>
            <person name="Bruce D.C."/>
            <person name="Doggett N.A."/>
            <person name="Smith L.A."/>
            <person name="Marks J.D."/>
            <person name="Xie G."/>
            <person name="Brettin T.S."/>
        </authorList>
    </citation>
    <scope>NUCLEOTIDE SEQUENCE [LARGE SCALE GENOMIC DNA]</scope>
    <source>
        <strain>Hall / ATCC 3502 / NCTC 13319 / Type A</strain>
    </source>
</reference>
<sequence length="184" mass="20547">MIKEILKKADEKMGKTIVALKKELASMKAGRANPAMLDRIEAEYYGSMTPLNQLGNISVPEARVLLIQPWDKGALSAIEKAILKSDLGLNPSNDGTVIRLVIPELTEETRKNIVKTVKKTGEEAKVAIRSIRRDCNDDVKNLKKDDVSEDDIKKAEDDIQKKTDKYIKEIDSIISAKEKEILSI</sequence>
<comment type="function">
    <text evidence="1">Responsible for the release of ribosomes from messenger RNA at the termination of protein biosynthesis. May increase the efficiency of translation by recycling ribosomes from one round of translation to another.</text>
</comment>
<comment type="subcellular location">
    <subcellularLocation>
        <location evidence="1">Cytoplasm</location>
    </subcellularLocation>
</comment>
<comment type="similarity">
    <text evidence="1">Belongs to the RRF family.</text>
</comment>
<evidence type="ECO:0000255" key="1">
    <source>
        <dbReference type="HAMAP-Rule" id="MF_00040"/>
    </source>
</evidence>
<dbReference type="EMBL" id="CP000727">
    <property type="protein sequence ID" value="ABS36121.1"/>
    <property type="molecule type" value="Genomic_DNA"/>
</dbReference>
<dbReference type="EMBL" id="AM412317">
    <property type="protein sequence ID" value="CAL83981.1"/>
    <property type="molecule type" value="Genomic_DNA"/>
</dbReference>
<dbReference type="RefSeq" id="WP_011986799.1">
    <property type="nucleotide sequence ID" value="NC_009698.1"/>
</dbReference>
<dbReference type="RefSeq" id="YP_001254930.1">
    <property type="nucleotide sequence ID" value="NC_009495.1"/>
</dbReference>
<dbReference type="RefSeq" id="YP_001388123.1">
    <property type="nucleotide sequence ID" value="NC_009698.1"/>
</dbReference>
<dbReference type="SMR" id="A5I4K9"/>
<dbReference type="GeneID" id="5186687"/>
<dbReference type="KEGG" id="cbh:CLC_2279"/>
<dbReference type="KEGG" id="cbo:CBO2432"/>
<dbReference type="PATRIC" id="fig|413999.7.peg.2409"/>
<dbReference type="HOGENOM" id="CLU_073981_2_0_9"/>
<dbReference type="PRO" id="PR:A5I4K9"/>
<dbReference type="Proteomes" id="UP000001986">
    <property type="component" value="Chromosome"/>
</dbReference>
<dbReference type="GO" id="GO:0005737">
    <property type="term" value="C:cytoplasm"/>
    <property type="evidence" value="ECO:0007669"/>
    <property type="project" value="UniProtKB-SubCell"/>
</dbReference>
<dbReference type="GO" id="GO:0043023">
    <property type="term" value="F:ribosomal large subunit binding"/>
    <property type="evidence" value="ECO:0000318"/>
    <property type="project" value="GO_Central"/>
</dbReference>
<dbReference type="GO" id="GO:0006412">
    <property type="term" value="P:translation"/>
    <property type="evidence" value="ECO:0000318"/>
    <property type="project" value="GO_Central"/>
</dbReference>
<dbReference type="GO" id="GO:0006415">
    <property type="term" value="P:translational termination"/>
    <property type="evidence" value="ECO:0007669"/>
    <property type="project" value="UniProtKB-UniRule"/>
</dbReference>
<dbReference type="CDD" id="cd00520">
    <property type="entry name" value="RRF"/>
    <property type="match status" value="1"/>
</dbReference>
<dbReference type="FunFam" id="1.10.132.20:FF:000001">
    <property type="entry name" value="Ribosome-recycling factor"/>
    <property type="match status" value="1"/>
</dbReference>
<dbReference type="FunFam" id="3.30.1360.40:FF:000001">
    <property type="entry name" value="Ribosome-recycling factor"/>
    <property type="match status" value="1"/>
</dbReference>
<dbReference type="Gene3D" id="3.30.1360.40">
    <property type="match status" value="1"/>
</dbReference>
<dbReference type="Gene3D" id="1.10.132.20">
    <property type="entry name" value="Ribosome-recycling factor"/>
    <property type="match status" value="1"/>
</dbReference>
<dbReference type="HAMAP" id="MF_00040">
    <property type="entry name" value="RRF"/>
    <property type="match status" value="1"/>
</dbReference>
<dbReference type="InterPro" id="IPR002661">
    <property type="entry name" value="Ribosome_recyc_fac"/>
</dbReference>
<dbReference type="InterPro" id="IPR023584">
    <property type="entry name" value="Ribosome_recyc_fac_dom"/>
</dbReference>
<dbReference type="InterPro" id="IPR036191">
    <property type="entry name" value="RRF_sf"/>
</dbReference>
<dbReference type="NCBIfam" id="TIGR00496">
    <property type="entry name" value="frr"/>
    <property type="match status" value="1"/>
</dbReference>
<dbReference type="PANTHER" id="PTHR20982:SF3">
    <property type="entry name" value="MITOCHONDRIAL RIBOSOME RECYCLING FACTOR PSEUDO 1"/>
    <property type="match status" value="1"/>
</dbReference>
<dbReference type="PANTHER" id="PTHR20982">
    <property type="entry name" value="RIBOSOME RECYCLING FACTOR"/>
    <property type="match status" value="1"/>
</dbReference>
<dbReference type="Pfam" id="PF01765">
    <property type="entry name" value="RRF"/>
    <property type="match status" value="1"/>
</dbReference>
<dbReference type="SUPFAM" id="SSF55194">
    <property type="entry name" value="Ribosome recycling factor, RRF"/>
    <property type="match status" value="1"/>
</dbReference>
<accession>A5I4K9</accession>
<accession>A7G5Q8</accession>
<protein>
    <recommendedName>
        <fullName evidence="1">Ribosome-recycling factor</fullName>
        <shortName evidence="1">RRF</shortName>
    </recommendedName>
    <alternativeName>
        <fullName evidence="1">Ribosome-releasing factor</fullName>
    </alternativeName>
</protein>
<organism>
    <name type="scientific">Clostridium botulinum (strain Hall / ATCC 3502 / NCTC 13319 / Type A)</name>
    <dbReference type="NCBI Taxonomy" id="441771"/>
    <lineage>
        <taxon>Bacteria</taxon>
        <taxon>Bacillati</taxon>
        <taxon>Bacillota</taxon>
        <taxon>Clostridia</taxon>
        <taxon>Eubacteriales</taxon>
        <taxon>Clostridiaceae</taxon>
        <taxon>Clostridium</taxon>
    </lineage>
</organism>
<gene>
    <name evidence="1" type="primary">frr</name>
    <name type="ordered locus">CBO2432</name>
    <name type="ordered locus">CLC_2279</name>
</gene>
<feature type="chain" id="PRO_1000003141" description="Ribosome-recycling factor">
    <location>
        <begin position="1"/>
        <end position="184"/>
    </location>
</feature>
<proteinExistence type="inferred from homology"/>
<name>RRF_CLOBH</name>
<keyword id="KW-0963">Cytoplasm</keyword>
<keyword id="KW-0648">Protein biosynthesis</keyword>
<keyword id="KW-1185">Reference proteome</keyword>